<name>PYRH_CORJK</name>
<accession>Q4JV20</accession>
<dbReference type="EC" id="2.7.4.22" evidence="1"/>
<dbReference type="EMBL" id="CR931997">
    <property type="protein sequence ID" value="CAI37337.1"/>
    <property type="status" value="ALT_INIT"/>
    <property type="molecule type" value="Genomic_DNA"/>
</dbReference>
<dbReference type="SMR" id="Q4JV20"/>
<dbReference type="STRING" id="306537.jk1173"/>
<dbReference type="KEGG" id="cjk:jk1173"/>
<dbReference type="eggNOG" id="COG0528">
    <property type="taxonomic scope" value="Bacteria"/>
</dbReference>
<dbReference type="HOGENOM" id="CLU_033861_0_0_11"/>
<dbReference type="OrthoDB" id="9807458at2"/>
<dbReference type="UniPathway" id="UPA00159">
    <property type="reaction ID" value="UER00275"/>
</dbReference>
<dbReference type="Proteomes" id="UP000000545">
    <property type="component" value="Chromosome"/>
</dbReference>
<dbReference type="GO" id="GO:0005737">
    <property type="term" value="C:cytoplasm"/>
    <property type="evidence" value="ECO:0007669"/>
    <property type="project" value="UniProtKB-SubCell"/>
</dbReference>
<dbReference type="GO" id="GO:0005524">
    <property type="term" value="F:ATP binding"/>
    <property type="evidence" value="ECO:0007669"/>
    <property type="project" value="UniProtKB-KW"/>
</dbReference>
<dbReference type="GO" id="GO:0033862">
    <property type="term" value="F:UMP kinase activity"/>
    <property type="evidence" value="ECO:0007669"/>
    <property type="project" value="UniProtKB-EC"/>
</dbReference>
<dbReference type="GO" id="GO:0044210">
    <property type="term" value="P:'de novo' CTP biosynthetic process"/>
    <property type="evidence" value="ECO:0007669"/>
    <property type="project" value="UniProtKB-UniRule"/>
</dbReference>
<dbReference type="GO" id="GO:0006225">
    <property type="term" value="P:UDP biosynthetic process"/>
    <property type="evidence" value="ECO:0007669"/>
    <property type="project" value="TreeGrafter"/>
</dbReference>
<dbReference type="CDD" id="cd04254">
    <property type="entry name" value="AAK_UMPK-PyrH-Ec"/>
    <property type="match status" value="1"/>
</dbReference>
<dbReference type="FunFam" id="3.40.1160.10:FF:000001">
    <property type="entry name" value="Uridylate kinase"/>
    <property type="match status" value="1"/>
</dbReference>
<dbReference type="Gene3D" id="3.40.1160.10">
    <property type="entry name" value="Acetylglutamate kinase-like"/>
    <property type="match status" value="1"/>
</dbReference>
<dbReference type="HAMAP" id="MF_01220_B">
    <property type="entry name" value="PyrH_B"/>
    <property type="match status" value="1"/>
</dbReference>
<dbReference type="InterPro" id="IPR036393">
    <property type="entry name" value="AceGlu_kinase-like_sf"/>
</dbReference>
<dbReference type="InterPro" id="IPR001048">
    <property type="entry name" value="Asp/Glu/Uridylate_kinase"/>
</dbReference>
<dbReference type="InterPro" id="IPR011817">
    <property type="entry name" value="Uridylate_kinase"/>
</dbReference>
<dbReference type="InterPro" id="IPR015963">
    <property type="entry name" value="Uridylate_kinase_bac"/>
</dbReference>
<dbReference type="NCBIfam" id="TIGR02075">
    <property type="entry name" value="pyrH_bact"/>
    <property type="match status" value="1"/>
</dbReference>
<dbReference type="PANTHER" id="PTHR42833">
    <property type="entry name" value="URIDYLATE KINASE"/>
    <property type="match status" value="1"/>
</dbReference>
<dbReference type="PANTHER" id="PTHR42833:SF4">
    <property type="entry name" value="URIDYLATE KINASE PUMPKIN, CHLOROPLASTIC"/>
    <property type="match status" value="1"/>
</dbReference>
<dbReference type="Pfam" id="PF00696">
    <property type="entry name" value="AA_kinase"/>
    <property type="match status" value="1"/>
</dbReference>
<dbReference type="PIRSF" id="PIRSF005650">
    <property type="entry name" value="Uridylate_kin"/>
    <property type="match status" value="1"/>
</dbReference>
<dbReference type="SUPFAM" id="SSF53633">
    <property type="entry name" value="Carbamate kinase-like"/>
    <property type="match status" value="1"/>
</dbReference>
<protein>
    <recommendedName>
        <fullName evidence="1">Uridylate kinase</fullName>
        <shortName evidence="1">UK</shortName>
        <ecNumber evidence="1">2.7.4.22</ecNumber>
    </recommendedName>
    <alternativeName>
        <fullName evidence="1">Uridine monophosphate kinase</fullName>
        <shortName evidence="1">UMP kinase</shortName>
        <shortName evidence="1">UMPK</shortName>
    </alternativeName>
</protein>
<proteinExistence type="inferred from homology"/>
<feature type="chain" id="PRO_0000323829" description="Uridylate kinase">
    <location>
        <begin position="1"/>
        <end position="246"/>
    </location>
</feature>
<feature type="binding site" evidence="1">
    <location>
        <begin position="16"/>
        <end position="19"/>
    </location>
    <ligand>
        <name>ATP</name>
        <dbReference type="ChEBI" id="CHEBI:30616"/>
    </ligand>
</feature>
<feature type="binding site" evidence="1">
    <location>
        <position position="57"/>
    </location>
    <ligand>
        <name>UMP</name>
        <dbReference type="ChEBI" id="CHEBI:57865"/>
    </ligand>
</feature>
<feature type="binding site" evidence="1">
    <location>
        <position position="58"/>
    </location>
    <ligand>
        <name>ATP</name>
        <dbReference type="ChEBI" id="CHEBI:30616"/>
    </ligand>
</feature>
<feature type="binding site" evidence="1">
    <location>
        <position position="62"/>
    </location>
    <ligand>
        <name>ATP</name>
        <dbReference type="ChEBI" id="CHEBI:30616"/>
    </ligand>
</feature>
<feature type="binding site" evidence="1">
    <location>
        <position position="77"/>
    </location>
    <ligand>
        <name>UMP</name>
        <dbReference type="ChEBI" id="CHEBI:57865"/>
    </ligand>
</feature>
<feature type="binding site" evidence="1">
    <location>
        <begin position="138"/>
        <end position="145"/>
    </location>
    <ligand>
        <name>UMP</name>
        <dbReference type="ChEBI" id="CHEBI:57865"/>
    </ligand>
</feature>
<feature type="binding site" evidence="1">
    <location>
        <position position="171"/>
    </location>
    <ligand>
        <name>ATP</name>
        <dbReference type="ChEBI" id="CHEBI:30616"/>
    </ligand>
</feature>
<feature type="binding site" evidence="1">
    <location>
        <position position="174"/>
    </location>
    <ligand>
        <name>ATP</name>
        <dbReference type="ChEBI" id="CHEBI:30616"/>
    </ligand>
</feature>
<gene>
    <name evidence="1" type="primary">pyrH</name>
    <name type="ordered locus">jk1173</name>
</gene>
<keyword id="KW-0067">ATP-binding</keyword>
<keyword id="KW-0963">Cytoplasm</keyword>
<keyword id="KW-0418">Kinase</keyword>
<keyword id="KW-0547">Nucleotide-binding</keyword>
<keyword id="KW-0665">Pyrimidine biosynthesis</keyword>
<keyword id="KW-1185">Reference proteome</keyword>
<keyword id="KW-0808">Transferase</keyword>
<organism>
    <name type="scientific">Corynebacterium jeikeium (strain K411)</name>
    <dbReference type="NCBI Taxonomy" id="306537"/>
    <lineage>
        <taxon>Bacteria</taxon>
        <taxon>Bacillati</taxon>
        <taxon>Actinomycetota</taxon>
        <taxon>Actinomycetes</taxon>
        <taxon>Mycobacteriales</taxon>
        <taxon>Corynebacteriaceae</taxon>
        <taxon>Corynebacterium</taxon>
    </lineage>
</organism>
<reference key="1">
    <citation type="journal article" date="2005" name="J. Bacteriol.">
        <title>Complete genome sequence and analysis of the multiresistant nosocomial pathogen Corynebacterium jeikeium K411, a lipid-requiring bacterium of the human skin flora.</title>
        <authorList>
            <person name="Tauch A."/>
            <person name="Kaiser O."/>
            <person name="Hain T."/>
            <person name="Goesmann A."/>
            <person name="Weisshaar B."/>
            <person name="Albersmeier A."/>
            <person name="Bekel T."/>
            <person name="Bischoff N."/>
            <person name="Brune I."/>
            <person name="Chakraborty T."/>
            <person name="Kalinowski J."/>
            <person name="Meyer F."/>
            <person name="Rupp O."/>
            <person name="Schneiker S."/>
            <person name="Viehoever P."/>
            <person name="Puehler A."/>
        </authorList>
    </citation>
    <scope>NUCLEOTIDE SEQUENCE [LARGE SCALE GENOMIC DNA]</scope>
    <source>
        <strain>K411</strain>
    </source>
</reference>
<sequence length="246" mass="26652">MTTAENREGYKRVMLKLGGEMFGGGKVGIDPDVVQNVARQIAEVSKSGVEVAVVIGGGNFFRGAELQQRGLDRSRSDYMGMLGTVMNCLALQDFLEQEGVDCRVQTAIQMTQVAEPYLPLRASRHLEKGRVVIFGAGMGMPYFSTDTTAAQRALEIGCEVLLMAKAVDGVYSDDPRTNPEAELFHEITPREVIEKGLKVADATAFSLCMDNKMPILVFNLLTDGNIARAVAGERIGTLVDGNVSTR</sequence>
<evidence type="ECO:0000255" key="1">
    <source>
        <dbReference type="HAMAP-Rule" id="MF_01220"/>
    </source>
</evidence>
<evidence type="ECO:0000305" key="2"/>
<comment type="function">
    <text evidence="1">Catalyzes the reversible phosphorylation of UMP to UDP.</text>
</comment>
<comment type="catalytic activity">
    <reaction evidence="1">
        <text>UMP + ATP = UDP + ADP</text>
        <dbReference type="Rhea" id="RHEA:24400"/>
        <dbReference type="ChEBI" id="CHEBI:30616"/>
        <dbReference type="ChEBI" id="CHEBI:57865"/>
        <dbReference type="ChEBI" id="CHEBI:58223"/>
        <dbReference type="ChEBI" id="CHEBI:456216"/>
        <dbReference type="EC" id="2.7.4.22"/>
    </reaction>
</comment>
<comment type="activity regulation">
    <text evidence="1">Inhibited by UTP.</text>
</comment>
<comment type="pathway">
    <text evidence="1">Pyrimidine metabolism; CTP biosynthesis via de novo pathway; UDP from UMP (UMPK route): step 1/1.</text>
</comment>
<comment type="subunit">
    <text evidence="1">Homohexamer.</text>
</comment>
<comment type="subcellular location">
    <subcellularLocation>
        <location evidence="1">Cytoplasm</location>
    </subcellularLocation>
</comment>
<comment type="similarity">
    <text evidence="1">Belongs to the UMP kinase family.</text>
</comment>
<comment type="sequence caution" evidence="2">
    <conflict type="erroneous initiation">
        <sequence resource="EMBL-CDS" id="CAI37337"/>
    </conflict>
</comment>